<keyword id="KW-1185">Reference proteome</keyword>
<accession>B8GHM1</accession>
<comment type="similarity">
    <text evidence="1">Belongs to the UPF0280 family.</text>
</comment>
<sequence>MIRAHFQFKETITTILAEEQAWIEVAKEAMITARQDLERYIARDPFFQMTLEPYTPDHGPSIAERMAGAAGGAGVGPMAAVAGTIAAIGVGAMARAGAAFGVIDNGGDIALITDRPLRIGIYAGTSPISGKVAFVLPPQPAVYGVCTSSATVGPSLSFGVADAVTVFASDPSVADAWATALCNQVRPGVSTAFDSLAGSGVDGAVAILGGEVQRWGSVPPMVSATVDENLITAGELY</sequence>
<reference key="1">
    <citation type="journal article" date="2015" name="Genome Announc.">
        <title>Complete Genome Sequence of Methanosphaerula palustris E1-9CT, a Hydrogenotrophic Methanogen Isolated from a Minerotrophic Fen Peatland.</title>
        <authorList>
            <person name="Cadillo-Quiroz H."/>
            <person name="Browne P."/>
            <person name="Kyrpides N."/>
            <person name="Woyke T."/>
            <person name="Goodwin L."/>
            <person name="Detter C."/>
            <person name="Yavitt J.B."/>
            <person name="Zinder S.H."/>
        </authorList>
    </citation>
    <scope>NUCLEOTIDE SEQUENCE [LARGE SCALE GENOMIC DNA]</scope>
    <source>
        <strain>ATCC BAA-1556 / DSM 19958 / E1-9c</strain>
    </source>
</reference>
<dbReference type="EMBL" id="CP001338">
    <property type="protein sequence ID" value="ACL16626.1"/>
    <property type="molecule type" value="Genomic_DNA"/>
</dbReference>
<dbReference type="RefSeq" id="WP_012617945.1">
    <property type="nucleotide sequence ID" value="NC_011832.1"/>
</dbReference>
<dbReference type="SMR" id="B8GHM1"/>
<dbReference type="STRING" id="521011.Mpal_1292"/>
<dbReference type="GeneID" id="7271152"/>
<dbReference type="KEGG" id="mpl:Mpal_1292"/>
<dbReference type="eggNOG" id="arCOG04376">
    <property type="taxonomic scope" value="Archaea"/>
</dbReference>
<dbReference type="HOGENOM" id="CLU_074757_0_0_2"/>
<dbReference type="OrthoDB" id="50299at2157"/>
<dbReference type="Proteomes" id="UP000002457">
    <property type="component" value="Chromosome"/>
</dbReference>
<dbReference type="Gene3D" id="3.10.520.10">
    <property type="entry name" value="ApbE-like domains"/>
    <property type="match status" value="1"/>
</dbReference>
<dbReference type="HAMAP" id="MF_01079">
    <property type="entry name" value="UPF0280"/>
    <property type="match status" value="1"/>
</dbReference>
<dbReference type="InterPro" id="IPR003374">
    <property type="entry name" value="ApbE-like_sf"/>
</dbReference>
<dbReference type="InterPro" id="IPR037456">
    <property type="entry name" value="MA1715-like"/>
</dbReference>
<dbReference type="InterPro" id="IPR007183">
    <property type="entry name" value="UPF0280"/>
</dbReference>
<dbReference type="NCBIfam" id="NF003324">
    <property type="entry name" value="PRK04334.1-4"/>
    <property type="match status" value="1"/>
</dbReference>
<dbReference type="PIRSF" id="PIRSF006421">
    <property type="entry name" value="UCP006421"/>
    <property type="match status" value="1"/>
</dbReference>
<dbReference type="SUPFAM" id="SSF143631">
    <property type="entry name" value="ApbE-like"/>
    <property type="match status" value="1"/>
</dbReference>
<proteinExistence type="inferred from homology"/>
<organism>
    <name type="scientific">Methanosphaerula palustris (strain ATCC BAA-1556 / DSM 19958 / E1-9c)</name>
    <dbReference type="NCBI Taxonomy" id="521011"/>
    <lineage>
        <taxon>Archaea</taxon>
        <taxon>Methanobacteriati</taxon>
        <taxon>Methanobacteriota</taxon>
        <taxon>Stenosarchaea group</taxon>
        <taxon>Methanomicrobia</taxon>
        <taxon>Methanomicrobiales</taxon>
        <taxon>Methanoregulaceae</taxon>
        <taxon>Methanosphaerula</taxon>
    </lineage>
</organism>
<name>Y1292_METPE</name>
<gene>
    <name type="ordered locus">Mpal_1292</name>
</gene>
<evidence type="ECO:0000255" key="1">
    <source>
        <dbReference type="HAMAP-Rule" id="MF_01079"/>
    </source>
</evidence>
<protein>
    <recommendedName>
        <fullName evidence="1">UPF0280 protein Mpal_1292</fullName>
    </recommendedName>
</protein>
<feature type="chain" id="PRO_1000149813" description="UPF0280 protein Mpal_1292">
    <location>
        <begin position="1"/>
        <end position="237"/>
    </location>
</feature>